<proteinExistence type="inferred from homology"/>
<comment type="function">
    <text evidence="1">Catalyzes the attachment of threonine to tRNA(Thr) in a two-step reaction: L-threonine is first activated by ATP to form Thr-AMP and then transferred to the acceptor end of tRNA(Thr). Also edits incorrectly charged L-seryl-tRNA(Thr).</text>
</comment>
<comment type="catalytic activity">
    <reaction evidence="1">
        <text>tRNA(Thr) + L-threonine + ATP = L-threonyl-tRNA(Thr) + AMP + diphosphate + H(+)</text>
        <dbReference type="Rhea" id="RHEA:24624"/>
        <dbReference type="Rhea" id="RHEA-COMP:9670"/>
        <dbReference type="Rhea" id="RHEA-COMP:9704"/>
        <dbReference type="ChEBI" id="CHEBI:15378"/>
        <dbReference type="ChEBI" id="CHEBI:30616"/>
        <dbReference type="ChEBI" id="CHEBI:33019"/>
        <dbReference type="ChEBI" id="CHEBI:57926"/>
        <dbReference type="ChEBI" id="CHEBI:78442"/>
        <dbReference type="ChEBI" id="CHEBI:78534"/>
        <dbReference type="ChEBI" id="CHEBI:456215"/>
        <dbReference type="EC" id="6.1.1.3"/>
    </reaction>
</comment>
<comment type="cofactor">
    <cofactor evidence="1">
        <name>Zn(2+)</name>
        <dbReference type="ChEBI" id="CHEBI:29105"/>
    </cofactor>
    <text evidence="1">Binds 1 zinc ion per subunit.</text>
</comment>
<comment type="subunit">
    <text evidence="1">Homodimer.</text>
</comment>
<comment type="subcellular location">
    <subcellularLocation>
        <location evidence="1">Cytoplasm</location>
    </subcellularLocation>
</comment>
<comment type="similarity">
    <text evidence="1">Belongs to the class-II aminoacyl-tRNA synthetase family.</text>
</comment>
<accession>Q9Z7A0</accession>
<accession>Q9JQA2</accession>
<name>SYT_CHLPN</name>
<dbReference type="EC" id="6.1.1.3" evidence="1"/>
<dbReference type="EMBL" id="AE001363">
    <property type="protein sequence ID" value="AAD18944.1"/>
    <property type="molecule type" value="Genomic_DNA"/>
</dbReference>
<dbReference type="EMBL" id="AE002161">
    <property type="protein sequence ID" value="AAF38837.1"/>
    <property type="molecule type" value="Genomic_DNA"/>
</dbReference>
<dbReference type="EMBL" id="BA000008">
    <property type="protein sequence ID" value="BAA99014.1"/>
    <property type="molecule type" value="Genomic_DNA"/>
</dbReference>
<dbReference type="EMBL" id="AE009440">
    <property type="protein sequence ID" value="AAP98764.1"/>
    <property type="molecule type" value="Genomic_DNA"/>
</dbReference>
<dbReference type="PIR" id="D86591">
    <property type="entry name" value="D86591"/>
</dbReference>
<dbReference type="PIR" id="G72034">
    <property type="entry name" value="G72034"/>
</dbReference>
<dbReference type="RefSeq" id="NP_225001.1">
    <property type="nucleotide sequence ID" value="NC_000922.1"/>
</dbReference>
<dbReference type="RefSeq" id="WP_010883443.1">
    <property type="nucleotide sequence ID" value="NZ_LN847257.1"/>
</dbReference>
<dbReference type="SMR" id="Q9Z7A0"/>
<dbReference type="STRING" id="406984.CPK_ORF00214"/>
<dbReference type="GeneID" id="45050861"/>
<dbReference type="KEGG" id="cpa:CP_1065"/>
<dbReference type="KEGG" id="cpj:thrS"/>
<dbReference type="KEGG" id="cpn:CPn_0806"/>
<dbReference type="KEGG" id="cpt:CpB0835"/>
<dbReference type="PATRIC" id="fig|115713.3.peg.885"/>
<dbReference type="eggNOG" id="COG0441">
    <property type="taxonomic scope" value="Bacteria"/>
</dbReference>
<dbReference type="HOGENOM" id="CLU_008554_0_1_0"/>
<dbReference type="OrthoDB" id="9802304at2"/>
<dbReference type="Proteomes" id="UP000000583">
    <property type="component" value="Chromosome"/>
</dbReference>
<dbReference type="Proteomes" id="UP000000801">
    <property type="component" value="Chromosome"/>
</dbReference>
<dbReference type="GO" id="GO:0005737">
    <property type="term" value="C:cytoplasm"/>
    <property type="evidence" value="ECO:0007669"/>
    <property type="project" value="UniProtKB-SubCell"/>
</dbReference>
<dbReference type="GO" id="GO:0005524">
    <property type="term" value="F:ATP binding"/>
    <property type="evidence" value="ECO:0007669"/>
    <property type="project" value="UniProtKB-UniRule"/>
</dbReference>
<dbReference type="GO" id="GO:0046872">
    <property type="term" value="F:metal ion binding"/>
    <property type="evidence" value="ECO:0007669"/>
    <property type="project" value="UniProtKB-KW"/>
</dbReference>
<dbReference type="GO" id="GO:0004829">
    <property type="term" value="F:threonine-tRNA ligase activity"/>
    <property type="evidence" value="ECO:0007669"/>
    <property type="project" value="UniProtKB-UniRule"/>
</dbReference>
<dbReference type="GO" id="GO:0000049">
    <property type="term" value="F:tRNA binding"/>
    <property type="evidence" value="ECO:0007669"/>
    <property type="project" value="UniProtKB-KW"/>
</dbReference>
<dbReference type="GO" id="GO:0006435">
    <property type="term" value="P:threonyl-tRNA aminoacylation"/>
    <property type="evidence" value="ECO:0007669"/>
    <property type="project" value="UniProtKB-UniRule"/>
</dbReference>
<dbReference type="CDD" id="cd00860">
    <property type="entry name" value="ThrRS_anticodon"/>
    <property type="match status" value="1"/>
</dbReference>
<dbReference type="CDD" id="cd00771">
    <property type="entry name" value="ThrRS_core"/>
    <property type="match status" value="1"/>
</dbReference>
<dbReference type="FunFam" id="3.30.930.10:FF:000019">
    <property type="entry name" value="Threonine--tRNA ligase"/>
    <property type="match status" value="1"/>
</dbReference>
<dbReference type="FunFam" id="3.30.980.10:FF:000005">
    <property type="entry name" value="Threonyl-tRNA synthetase, mitochondrial"/>
    <property type="match status" value="1"/>
</dbReference>
<dbReference type="Gene3D" id="3.30.54.20">
    <property type="match status" value="1"/>
</dbReference>
<dbReference type="Gene3D" id="3.40.50.800">
    <property type="entry name" value="Anticodon-binding domain"/>
    <property type="match status" value="1"/>
</dbReference>
<dbReference type="Gene3D" id="3.30.930.10">
    <property type="entry name" value="Bira Bifunctional Protein, Domain 2"/>
    <property type="match status" value="1"/>
</dbReference>
<dbReference type="Gene3D" id="3.30.980.10">
    <property type="entry name" value="Threonyl-trna Synthetase, Chain A, domain 2"/>
    <property type="match status" value="1"/>
</dbReference>
<dbReference type="HAMAP" id="MF_00184">
    <property type="entry name" value="Thr_tRNA_synth"/>
    <property type="match status" value="1"/>
</dbReference>
<dbReference type="InterPro" id="IPR002314">
    <property type="entry name" value="aa-tRNA-synt_IIb"/>
</dbReference>
<dbReference type="InterPro" id="IPR006195">
    <property type="entry name" value="aa-tRNA-synth_II"/>
</dbReference>
<dbReference type="InterPro" id="IPR045864">
    <property type="entry name" value="aa-tRNA-synth_II/BPL/LPL"/>
</dbReference>
<dbReference type="InterPro" id="IPR004154">
    <property type="entry name" value="Anticodon-bd"/>
</dbReference>
<dbReference type="InterPro" id="IPR036621">
    <property type="entry name" value="Anticodon-bd_dom_sf"/>
</dbReference>
<dbReference type="InterPro" id="IPR016155">
    <property type="entry name" value="Mopterin_synth/thiamin_S_b"/>
</dbReference>
<dbReference type="InterPro" id="IPR004095">
    <property type="entry name" value="TGS"/>
</dbReference>
<dbReference type="InterPro" id="IPR002320">
    <property type="entry name" value="Thr-tRNA-ligase_IIa"/>
</dbReference>
<dbReference type="InterPro" id="IPR018163">
    <property type="entry name" value="Thr/Ala-tRNA-synth_IIc_edit"/>
</dbReference>
<dbReference type="InterPro" id="IPR047246">
    <property type="entry name" value="ThrRS_anticodon"/>
</dbReference>
<dbReference type="InterPro" id="IPR033728">
    <property type="entry name" value="ThrRS_core"/>
</dbReference>
<dbReference type="InterPro" id="IPR012947">
    <property type="entry name" value="tRNA_SAD"/>
</dbReference>
<dbReference type="NCBIfam" id="TIGR00418">
    <property type="entry name" value="thrS"/>
    <property type="match status" value="1"/>
</dbReference>
<dbReference type="PANTHER" id="PTHR11451:SF44">
    <property type="entry name" value="THREONINE--TRNA LIGASE, CHLOROPLASTIC_MITOCHONDRIAL 2"/>
    <property type="match status" value="1"/>
</dbReference>
<dbReference type="PANTHER" id="PTHR11451">
    <property type="entry name" value="THREONINE-TRNA LIGASE"/>
    <property type="match status" value="1"/>
</dbReference>
<dbReference type="Pfam" id="PF03129">
    <property type="entry name" value="HGTP_anticodon"/>
    <property type="match status" value="1"/>
</dbReference>
<dbReference type="Pfam" id="PF02824">
    <property type="entry name" value="TGS"/>
    <property type="match status" value="1"/>
</dbReference>
<dbReference type="Pfam" id="PF00587">
    <property type="entry name" value="tRNA-synt_2b"/>
    <property type="match status" value="1"/>
</dbReference>
<dbReference type="Pfam" id="PF07973">
    <property type="entry name" value="tRNA_SAD"/>
    <property type="match status" value="1"/>
</dbReference>
<dbReference type="PRINTS" id="PR01047">
    <property type="entry name" value="TRNASYNTHTHR"/>
</dbReference>
<dbReference type="SMART" id="SM00863">
    <property type="entry name" value="tRNA_SAD"/>
    <property type="match status" value="1"/>
</dbReference>
<dbReference type="SUPFAM" id="SSF52954">
    <property type="entry name" value="Class II aaRS ABD-related"/>
    <property type="match status" value="1"/>
</dbReference>
<dbReference type="SUPFAM" id="SSF55681">
    <property type="entry name" value="Class II aaRS and biotin synthetases"/>
    <property type="match status" value="1"/>
</dbReference>
<dbReference type="SUPFAM" id="SSF54285">
    <property type="entry name" value="MoaD/ThiS"/>
    <property type="match status" value="1"/>
</dbReference>
<dbReference type="SUPFAM" id="SSF55186">
    <property type="entry name" value="ThrRS/AlaRS common domain"/>
    <property type="match status" value="1"/>
</dbReference>
<dbReference type="PROSITE" id="PS50862">
    <property type="entry name" value="AA_TRNA_LIGASE_II"/>
    <property type="match status" value="1"/>
</dbReference>
<dbReference type="PROSITE" id="PS51880">
    <property type="entry name" value="TGS"/>
    <property type="match status" value="1"/>
</dbReference>
<organism>
    <name type="scientific">Chlamydia pneumoniae</name>
    <name type="common">Chlamydophila pneumoniae</name>
    <dbReference type="NCBI Taxonomy" id="83558"/>
    <lineage>
        <taxon>Bacteria</taxon>
        <taxon>Pseudomonadati</taxon>
        <taxon>Chlamydiota</taxon>
        <taxon>Chlamydiia</taxon>
        <taxon>Chlamydiales</taxon>
        <taxon>Chlamydiaceae</taxon>
        <taxon>Chlamydia/Chlamydophila group</taxon>
        <taxon>Chlamydia</taxon>
    </lineage>
</organism>
<keyword id="KW-0030">Aminoacyl-tRNA synthetase</keyword>
<keyword id="KW-0067">ATP-binding</keyword>
<keyword id="KW-0963">Cytoplasm</keyword>
<keyword id="KW-0436">Ligase</keyword>
<keyword id="KW-0479">Metal-binding</keyword>
<keyword id="KW-0547">Nucleotide-binding</keyword>
<keyword id="KW-0648">Protein biosynthesis</keyword>
<keyword id="KW-0694">RNA-binding</keyword>
<keyword id="KW-0820">tRNA-binding</keyword>
<keyword id="KW-0862">Zinc</keyword>
<sequence length="635" mass="72685">MIQVTCDQKNYEVLEGTTAAELAKQLKNSHQFIGVLINERPRDLSTHLNEGDTLVFLTSEDPEGREIFLHTSAHLLAQAVLRLWPDAIPTIGPVIDHGFYYDFANLSISESDFPLIEDTVKQIVDEKLAISRFTYGDKQQALAQFPQNPFKTELIRELPENEEISAYSQGEFFDLCRGPHLPSTAHVKAFKVLRTSAAYWRGDPSRESLVRIYGTSFPTSKELRAHLEQIEEAKKRDHRVLGAKLDLFSQQESSPGMPFFHPRGMIVWDALIRYWKQLHTAAGYKEILTPQLMNRQLWEVSGHWDNYKANMYTLQIDDEDYAIKPMNCPGCMLYYKTRLHSYKEFPLRVAEVGHVHRQEASGALSGLMRVRAFHQDDAHVFLTPEQVEEETLNILQLVSTLYGTFGLEYHLELSTRPEKDTIGDDSLWELATDALNRALVQSGTPFIVRPGEGAFYGPKIDIHVKDAIQRTWQCGTIQLDMFLPERFELEYTTAQGTKSVPVMLHRALFGSIERFLGILIENFKGRFPLWLSPEQVRIITVADRHIPRAKELEEAWKRLGLVVTLDDSSESVSKKIRNAQNMQVNYMITLGDHEINENVLAVRTRDNRVINDVSVERFLNTILEEKNSLSLTALL</sequence>
<protein>
    <recommendedName>
        <fullName evidence="1">Threonine--tRNA ligase</fullName>
        <ecNumber evidence="1">6.1.1.3</ecNumber>
    </recommendedName>
    <alternativeName>
        <fullName evidence="1">Threonyl-tRNA synthetase</fullName>
        <shortName evidence="1">ThrRS</shortName>
    </alternativeName>
</protein>
<gene>
    <name evidence="1" type="primary">thrS</name>
    <name type="ordered locus">CPn_0806</name>
    <name type="ordered locus">CP_1065</name>
    <name type="ordered locus">CpB0835</name>
</gene>
<feature type="chain" id="PRO_0000100961" description="Threonine--tRNA ligase">
    <location>
        <begin position="1"/>
        <end position="635"/>
    </location>
</feature>
<feature type="domain" description="TGS" evidence="2">
    <location>
        <begin position="1"/>
        <end position="58"/>
    </location>
</feature>
<feature type="region of interest" description="Catalytic" evidence="1">
    <location>
        <begin position="237"/>
        <end position="528"/>
    </location>
</feature>
<feature type="binding site" evidence="1">
    <location>
        <position position="328"/>
    </location>
    <ligand>
        <name>Zn(2+)</name>
        <dbReference type="ChEBI" id="CHEBI:29105"/>
    </ligand>
</feature>
<feature type="binding site" evidence="1">
    <location>
        <position position="379"/>
    </location>
    <ligand>
        <name>Zn(2+)</name>
        <dbReference type="ChEBI" id="CHEBI:29105"/>
    </ligand>
</feature>
<feature type="binding site" evidence="1">
    <location>
        <position position="505"/>
    </location>
    <ligand>
        <name>Zn(2+)</name>
        <dbReference type="ChEBI" id="CHEBI:29105"/>
    </ligand>
</feature>
<evidence type="ECO:0000255" key="1">
    <source>
        <dbReference type="HAMAP-Rule" id="MF_00184"/>
    </source>
</evidence>
<evidence type="ECO:0000255" key="2">
    <source>
        <dbReference type="PROSITE-ProRule" id="PRU01228"/>
    </source>
</evidence>
<reference key="1">
    <citation type="journal article" date="1999" name="Nat. Genet.">
        <title>Comparative genomes of Chlamydia pneumoniae and C. trachomatis.</title>
        <authorList>
            <person name="Kalman S."/>
            <person name="Mitchell W.P."/>
            <person name="Marathe R."/>
            <person name="Lammel C.J."/>
            <person name="Fan J."/>
            <person name="Hyman R.W."/>
            <person name="Olinger L."/>
            <person name="Grimwood J."/>
            <person name="Davis R.W."/>
            <person name="Stephens R.S."/>
        </authorList>
    </citation>
    <scope>NUCLEOTIDE SEQUENCE [LARGE SCALE GENOMIC DNA]</scope>
    <source>
        <strain>CWL029</strain>
    </source>
</reference>
<reference key="2">
    <citation type="journal article" date="2000" name="Nucleic Acids Res.">
        <title>Genome sequences of Chlamydia trachomatis MoPn and Chlamydia pneumoniae AR39.</title>
        <authorList>
            <person name="Read T.D."/>
            <person name="Brunham R.C."/>
            <person name="Shen C."/>
            <person name="Gill S.R."/>
            <person name="Heidelberg J.F."/>
            <person name="White O."/>
            <person name="Hickey E.K."/>
            <person name="Peterson J.D."/>
            <person name="Utterback T.R."/>
            <person name="Berry K.J."/>
            <person name="Bass S."/>
            <person name="Linher K.D."/>
            <person name="Weidman J.F."/>
            <person name="Khouri H.M."/>
            <person name="Craven B."/>
            <person name="Bowman C."/>
            <person name="Dodson R.J."/>
            <person name="Gwinn M.L."/>
            <person name="Nelson W.C."/>
            <person name="DeBoy R.T."/>
            <person name="Kolonay J.F."/>
            <person name="McClarty G."/>
            <person name="Salzberg S.L."/>
            <person name="Eisen J.A."/>
            <person name="Fraser C.M."/>
        </authorList>
    </citation>
    <scope>NUCLEOTIDE SEQUENCE [LARGE SCALE GENOMIC DNA]</scope>
    <source>
        <strain>AR39</strain>
    </source>
</reference>
<reference key="3">
    <citation type="journal article" date="2000" name="Nucleic Acids Res.">
        <title>Comparison of whole genome sequences of Chlamydia pneumoniae J138 from Japan and CWL029 from USA.</title>
        <authorList>
            <person name="Shirai M."/>
            <person name="Hirakawa H."/>
            <person name="Kimoto M."/>
            <person name="Tabuchi M."/>
            <person name="Kishi F."/>
            <person name="Ouchi K."/>
            <person name="Shiba T."/>
            <person name="Ishii K."/>
            <person name="Hattori M."/>
            <person name="Kuhara S."/>
            <person name="Nakazawa T."/>
        </authorList>
    </citation>
    <scope>NUCLEOTIDE SEQUENCE [LARGE SCALE GENOMIC DNA]</scope>
    <source>
        <strain>J138</strain>
    </source>
</reference>
<reference key="4">
    <citation type="submission" date="2002-05" db="EMBL/GenBank/DDBJ databases">
        <title>The genome sequence of Chlamydia pneumoniae TW183 and comparison with other Chlamydia strains based on whole genome sequence analysis.</title>
        <authorList>
            <person name="Geng M.M."/>
            <person name="Schuhmacher A."/>
            <person name="Muehldorfer I."/>
            <person name="Bensch K.W."/>
            <person name="Schaefer K.P."/>
            <person name="Schneider S."/>
            <person name="Pohl T."/>
            <person name="Essig A."/>
            <person name="Marre R."/>
            <person name="Melchers K."/>
        </authorList>
    </citation>
    <scope>NUCLEOTIDE SEQUENCE [LARGE SCALE GENOMIC DNA]</scope>
    <source>
        <strain>TW-183</strain>
    </source>
</reference>